<evidence type="ECO:0000255" key="1">
    <source>
        <dbReference type="HAMAP-Rule" id="MF_00182"/>
    </source>
</evidence>
<organism>
    <name type="scientific">Methylibium petroleiphilum (strain ATCC BAA-1232 / LMG 22953 / PM1)</name>
    <dbReference type="NCBI Taxonomy" id="420662"/>
    <lineage>
        <taxon>Bacteria</taxon>
        <taxon>Pseudomonadati</taxon>
        <taxon>Pseudomonadota</taxon>
        <taxon>Betaproteobacteria</taxon>
        <taxon>Burkholderiales</taxon>
        <taxon>Sphaerotilaceae</taxon>
        <taxon>Methylibium</taxon>
    </lineage>
</organism>
<accession>A2SCF7</accession>
<gene>
    <name evidence="1" type="primary">fmt</name>
    <name type="ordered locus">Mpe_A0284</name>
</gene>
<keyword id="KW-0648">Protein biosynthesis</keyword>
<keyword id="KW-1185">Reference proteome</keyword>
<keyword id="KW-0808">Transferase</keyword>
<dbReference type="EC" id="2.1.2.9" evidence="1"/>
<dbReference type="EMBL" id="CP000555">
    <property type="protein sequence ID" value="ABM93246.1"/>
    <property type="molecule type" value="Genomic_DNA"/>
</dbReference>
<dbReference type="RefSeq" id="WP_011827885.1">
    <property type="nucleotide sequence ID" value="NC_008825.1"/>
</dbReference>
<dbReference type="SMR" id="A2SCF7"/>
<dbReference type="STRING" id="420662.Mpe_A0284"/>
<dbReference type="KEGG" id="mpt:Mpe_A0284"/>
<dbReference type="eggNOG" id="COG0223">
    <property type="taxonomic scope" value="Bacteria"/>
</dbReference>
<dbReference type="HOGENOM" id="CLU_033347_1_2_4"/>
<dbReference type="Proteomes" id="UP000000366">
    <property type="component" value="Chromosome"/>
</dbReference>
<dbReference type="GO" id="GO:0005829">
    <property type="term" value="C:cytosol"/>
    <property type="evidence" value="ECO:0007669"/>
    <property type="project" value="TreeGrafter"/>
</dbReference>
<dbReference type="GO" id="GO:0004479">
    <property type="term" value="F:methionyl-tRNA formyltransferase activity"/>
    <property type="evidence" value="ECO:0007669"/>
    <property type="project" value="UniProtKB-UniRule"/>
</dbReference>
<dbReference type="CDD" id="cd08646">
    <property type="entry name" value="FMT_core_Met-tRNA-FMT_N"/>
    <property type="match status" value="1"/>
</dbReference>
<dbReference type="CDD" id="cd08704">
    <property type="entry name" value="Met_tRNA_FMT_C"/>
    <property type="match status" value="1"/>
</dbReference>
<dbReference type="Gene3D" id="3.10.25.10">
    <property type="entry name" value="Formyl transferase, C-terminal domain"/>
    <property type="match status" value="1"/>
</dbReference>
<dbReference type="Gene3D" id="3.40.50.170">
    <property type="entry name" value="Formyl transferase, N-terminal domain"/>
    <property type="match status" value="1"/>
</dbReference>
<dbReference type="HAMAP" id="MF_00182">
    <property type="entry name" value="Formyl_trans"/>
    <property type="match status" value="1"/>
</dbReference>
<dbReference type="InterPro" id="IPR005794">
    <property type="entry name" value="Fmt"/>
</dbReference>
<dbReference type="InterPro" id="IPR005793">
    <property type="entry name" value="Formyl_trans_C"/>
</dbReference>
<dbReference type="InterPro" id="IPR037022">
    <property type="entry name" value="Formyl_trans_C_sf"/>
</dbReference>
<dbReference type="InterPro" id="IPR002376">
    <property type="entry name" value="Formyl_transf_N"/>
</dbReference>
<dbReference type="InterPro" id="IPR036477">
    <property type="entry name" value="Formyl_transf_N_sf"/>
</dbReference>
<dbReference type="InterPro" id="IPR011034">
    <property type="entry name" value="Formyl_transferase-like_C_sf"/>
</dbReference>
<dbReference type="InterPro" id="IPR001555">
    <property type="entry name" value="GART_AS"/>
</dbReference>
<dbReference type="InterPro" id="IPR044135">
    <property type="entry name" value="Met-tRNA-FMT_C"/>
</dbReference>
<dbReference type="InterPro" id="IPR041711">
    <property type="entry name" value="Met-tRNA-FMT_N"/>
</dbReference>
<dbReference type="NCBIfam" id="TIGR00460">
    <property type="entry name" value="fmt"/>
    <property type="match status" value="1"/>
</dbReference>
<dbReference type="PANTHER" id="PTHR11138">
    <property type="entry name" value="METHIONYL-TRNA FORMYLTRANSFERASE"/>
    <property type="match status" value="1"/>
</dbReference>
<dbReference type="PANTHER" id="PTHR11138:SF5">
    <property type="entry name" value="METHIONYL-TRNA FORMYLTRANSFERASE, MITOCHONDRIAL"/>
    <property type="match status" value="1"/>
</dbReference>
<dbReference type="Pfam" id="PF02911">
    <property type="entry name" value="Formyl_trans_C"/>
    <property type="match status" value="1"/>
</dbReference>
<dbReference type="Pfam" id="PF00551">
    <property type="entry name" value="Formyl_trans_N"/>
    <property type="match status" value="1"/>
</dbReference>
<dbReference type="SUPFAM" id="SSF50486">
    <property type="entry name" value="FMT C-terminal domain-like"/>
    <property type="match status" value="1"/>
</dbReference>
<dbReference type="SUPFAM" id="SSF53328">
    <property type="entry name" value="Formyltransferase"/>
    <property type="match status" value="1"/>
</dbReference>
<dbReference type="PROSITE" id="PS00373">
    <property type="entry name" value="GART"/>
    <property type="match status" value="1"/>
</dbReference>
<reference key="1">
    <citation type="journal article" date="2007" name="J. Bacteriol.">
        <title>Whole-genome analysis of the methyl tert-butyl ether-degrading beta-proteobacterium Methylibium petroleiphilum PM1.</title>
        <authorList>
            <person name="Kane S.R."/>
            <person name="Chakicherla A.Y."/>
            <person name="Chain P.S.G."/>
            <person name="Schmidt R."/>
            <person name="Shin M.W."/>
            <person name="Legler T.C."/>
            <person name="Scow K.M."/>
            <person name="Larimer F.W."/>
            <person name="Lucas S.M."/>
            <person name="Richardson P.M."/>
            <person name="Hristova K.R."/>
        </authorList>
    </citation>
    <scope>NUCLEOTIDE SEQUENCE [LARGE SCALE GENOMIC DNA]</scope>
    <source>
        <strain>ATCC BAA-1232 / LMG 22953 / PM1</strain>
    </source>
</reference>
<proteinExistence type="inferred from homology"/>
<name>FMT_METPP</name>
<protein>
    <recommendedName>
        <fullName evidence="1">Methionyl-tRNA formyltransferase</fullName>
        <ecNumber evidence="1">2.1.2.9</ecNumber>
    </recommendedName>
</protein>
<sequence>MRIAFAGTPEFARVALRQLLDAGFDVPLVLTQPDRPAGRGLKLQASAVKALAVERGLAVTQPRSLRLDGKYPDDASAAREALEAAQLDAMVVAAYGLILPAWVLKLPARGCLNIHASLLPRWRGAAPIHRAIEAGDTETGITIMQMDEGLDTGDMLLSERESIRSDDSTATLHDRLSALGGRLIVEALEAAACGGLVRRPQPAEGVTYAHKIDKAEAAIDWSRPAEEIERRVRAFDPFPGASFQQAGETVKLWRAAVAPQRGAPGTVLSAAEGVLRVACGDLSLDLLQLQRPGGRRVGARDFLAVRSTLQVGATL</sequence>
<feature type="chain" id="PRO_1000020098" description="Methionyl-tRNA formyltransferase">
    <location>
        <begin position="1"/>
        <end position="315"/>
    </location>
</feature>
<feature type="binding site" evidence="1">
    <location>
        <begin position="117"/>
        <end position="120"/>
    </location>
    <ligand>
        <name>(6S)-5,6,7,8-tetrahydrofolate</name>
        <dbReference type="ChEBI" id="CHEBI:57453"/>
    </ligand>
</feature>
<comment type="function">
    <text evidence="1">Attaches a formyl group to the free amino group of methionyl-tRNA(fMet). The formyl group appears to play a dual role in the initiator identity of N-formylmethionyl-tRNA by promoting its recognition by IF2 and preventing the misappropriation of this tRNA by the elongation apparatus.</text>
</comment>
<comment type="catalytic activity">
    <reaction evidence="1">
        <text>L-methionyl-tRNA(fMet) + (6R)-10-formyltetrahydrofolate = N-formyl-L-methionyl-tRNA(fMet) + (6S)-5,6,7,8-tetrahydrofolate + H(+)</text>
        <dbReference type="Rhea" id="RHEA:24380"/>
        <dbReference type="Rhea" id="RHEA-COMP:9952"/>
        <dbReference type="Rhea" id="RHEA-COMP:9953"/>
        <dbReference type="ChEBI" id="CHEBI:15378"/>
        <dbReference type="ChEBI" id="CHEBI:57453"/>
        <dbReference type="ChEBI" id="CHEBI:78530"/>
        <dbReference type="ChEBI" id="CHEBI:78844"/>
        <dbReference type="ChEBI" id="CHEBI:195366"/>
        <dbReference type="EC" id="2.1.2.9"/>
    </reaction>
</comment>
<comment type="similarity">
    <text evidence="1">Belongs to the Fmt family.</text>
</comment>